<feature type="chain" id="PRO_0000347353" description="Urease accessory protein UreG 2">
    <location>
        <begin position="1"/>
        <end position="212"/>
    </location>
</feature>
<feature type="binding site" evidence="1">
    <location>
        <begin position="11"/>
        <end position="18"/>
    </location>
    <ligand>
        <name>GTP</name>
        <dbReference type="ChEBI" id="CHEBI:37565"/>
    </ligand>
</feature>
<protein>
    <recommendedName>
        <fullName evidence="1">Urease accessory protein UreG 2</fullName>
    </recommendedName>
</protein>
<evidence type="ECO:0000255" key="1">
    <source>
        <dbReference type="HAMAP-Rule" id="MF_01389"/>
    </source>
</evidence>
<name>UREG2_BRUAB</name>
<organism>
    <name type="scientific">Brucella abortus biovar 1 (strain 9-941)</name>
    <dbReference type="NCBI Taxonomy" id="262698"/>
    <lineage>
        <taxon>Bacteria</taxon>
        <taxon>Pseudomonadati</taxon>
        <taxon>Pseudomonadota</taxon>
        <taxon>Alphaproteobacteria</taxon>
        <taxon>Hyphomicrobiales</taxon>
        <taxon>Brucellaceae</taxon>
        <taxon>Brucella/Ochrobactrum group</taxon>
        <taxon>Brucella</taxon>
    </lineage>
</organism>
<sequence length="212" mass="22977">MKKIPRIGVGGPVGSGKTAIIEAVVPILIKLGYRILVITNDIVTTEDAKHVQRTLKGVLIEDRIVGVETGGCPHTAVREDPSMNLAAVEEMEAKFPDTDLVLLESGGDNLTLTFSPALIDFFIYVIDVAAGDKIPRKNGPGISQSDILVINKTDLAPYVGASLQVMDDDSRMMRGKKPFVFTNCKTNEGIDDLVHLIRENVLFDTEVSKESA</sequence>
<reference key="1">
    <citation type="journal article" date="2005" name="J. Bacteriol.">
        <title>Completion of the genome sequence of Brucella abortus and comparison to the highly similar genomes of Brucella melitensis and Brucella suis.</title>
        <authorList>
            <person name="Halling S.M."/>
            <person name="Peterson-Burch B.D."/>
            <person name="Bricker B.J."/>
            <person name="Zuerner R.L."/>
            <person name="Qing Z."/>
            <person name="Li L.-L."/>
            <person name="Kapur V."/>
            <person name="Alt D.P."/>
            <person name="Olsen S.C."/>
        </authorList>
    </citation>
    <scope>NUCLEOTIDE SEQUENCE [LARGE SCALE GENOMIC DNA]</scope>
    <source>
        <strain>9-941</strain>
    </source>
</reference>
<dbReference type="EMBL" id="AE017223">
    <property type="protein sequence ID" value="AAX74689.1"/>
    <property type="molecule type" value="Genomic_DNA"/>
</dbReference>
<dbReference type="SMR" id="Q57CE5"/>
<dbReference type="EnsemblBacteria" id="AAX74689">
    <property type="protein sequence ID" value="AAX74689"/>
    <property type="gene ID" value="BruAb1_1358"/>
</dbReference>
<dbReference type="KEGG" id="bmb:BruAb1_1358"/>
<dbReference type="HOGENOM" id="CLU_072144_1_0_5"/>
<dbReference type="Proteomes" id="UP000000540">
    <property type="component" value="Chromosome I"/>
</dbReference>
<dbReference type="GO" id="GO:0005737">
    <property type="term" value="C:cytoplasm"/>
    <property type="evidence" value="ECO:0007669"/>
    <property type="project" value="UniProtKB-SubCell"/>
</dbReference>
<dbReference type="GO" id="GO:0005525">
    <property type="term" value="F:GTP binding"/>
    <property type="evidence" value="ECO:0007669"/>
    <property type="project" value="UniProtKB-KW"/>
</dbReference>
<dbReference type="GO" id="GO:0003924">
    <property type="term" value="F:GTPase activity"/>
    <property type="evidence" value="ECO:0007669"/>
    <property type="project" value="InterPro"/>
</dbReference>
<dbReference type="GO" id="GO:0016151">
    <property type="term" value="F:nickel cation binding"/>
    <property type="evidence" value="ECO:0007669"/>
    <property type="project" value="UniProtKB-UniRule"/>
</dbReference>
<dbReference type="GO" id="GO:0043419">
    <property type="term" value="P:urea catabolic process"/>
    <property type="evidence" value="ECO:0007669"/>
    <property type="project" value="InterPro"/>
</dbReference>
<dbReference type="CDD" id="cd05540">
    <property type="entry name" value="UreG"/>
    <property type="match status" value="1"/>
</dbReference>
<dbReference type="Gene3D" id="3.40.50.300">
    <property type="entry name" value="P-loop containing nucleotide triphosphate hydrolases"/>
    <property type="match status" value="1"/>
</dbReference>
<dbReference type="HAMAP" id="MF_01389">
    <property type="entry name" value="UreG"/>
    <property type="match status" value="1"/>
</dbReference>
<dbReference type="InterPro" id="IPR003495">
    <property type="entry name" value="CobW/HypB/UreG_nucleotide-bd"/>
</dbReference>
<dbReference type="InterPro" id="IPR027417">
    <property type="entry name" value="P-loop_NTPase"/>
</dbReference>
<dbReference type="InterPro" id="IPR004400">
    <property type="entry name" value="UreG"/>
</dbReference>
<dbReference type="NCBIfam" id="TIGR00101">
    <property type="entry name" value="ureG"/>
    <property type="match status" value="1"/>
</dbReference>
<dbReference type="PANTHER" id="PTHR31715">
    <property type="entry name" value="UREASE ACCESSORY PROTEIN G"/>
    <property type="match status" value="1"/>
</dbReference>
<dbReference type="PANTHER" id="PTHR31715:SF0">
    <property type="entry name" value="UREASE ACCESSORY PROTEIN G"/>
    <property type="match status" value="1"/>
</dbReference>
<dbReference type="Pfam" id="PF02492">
    <property type="entry name" value="cobW"/>
    <property type="match status" value="1"/>
</dbReference>
<dbReference type="PIRSF" id="PIRSF005624">
    <property type="entry name" value="Ni-bind_GTPase"/>
    <property type="match status" value="1"/>
</dbReference>
<dbReference type="SUPFAM" id="SSF52540">
    <property type="entry name" value="P-loop containing nucleoside triphosphate hydrolases"/>
    <property type="match status" value="1"/>
</dbReference>
<proteinExistence type="inferred from homology"/>
<accession>Q57CE5</accession>
<keyword id="KW-0143">Chaperone</keyword>
<keyword id="KW-0963">Cytoplasm</keyword>
<keyword id="KW-0342">GTP-binding</keyword>
<keyword id="KW-0996">Nickel insertion</keyword>
<keyword id="KW-0547">Nucleotide-binding</keyword>
<gene>
    <name evidence="1" type="primary">ureG2</name>
    <name type="ordered locus">BruAb1_1358</name>
</gene>
<comment type="function">
    <text evidence="1">Facilitates the functional incorporation of the urease nickel metallocenter. This process requires GTP hydrolysis, probably effectuated by UreG.</text>
</comment>
<comment type="subunit">
    <text evidence="1">Homodimer. UreD, UreF and UreG form a complex that acts as a GTP-hydrolysis-dependent molecular chaperone, activating the urease apoprotein by helping to assemble the nickel containing metallocenter of UreC. The UreE protein probably delivers the nickel.</text>
</comment>
<comment type="subcellular location">
    <subcellularLocation>
        <location evidence="1">Cytoplasm</location>
    </subcellularLocation>
</comment>
<comment type="similarity">
    <text evidence="1">Belongs to the SIMIBI class G3E GTPase family. UreG subfamily.</text>
</comment>